<sequence length="118" mass="13681">MRNWRWLLLVLAALLSWLQHRFWFGPGNSGEVRMLQVQIVQQHQENERLRQRNASLAAEVKNLKDGDAAIEERARSELGMIKPGEIFYRVVEDIPTPLPNDTSADHGVDLAQPRREKR</sequence>
<evidence type="ECO:0000255" key="1">
    <source>
        <dbReference type="HAMAP-Rule" id="MF_00599"/>
    </source>
</evidence>
<evidence type="ECO:0000256" key="2">
    <source>
        <dbReference type="SAM" id="MobiDB-lite"/>
    </source>
</evidence>
<accession>Q9PDT7</accession>
<proteinExistence type="inferred from homology"/>
<dbReference type="EMBL" id="AE003849">
    <property type="protein sequence ID" value="AAF84101.1"/>
    <property type="molecule type" value="Genomic_DNA"/>
</dbReference>
<dbReference type="PIR" id="G82700">
    <property type="entry name" value="G82700"/>
</dbReference>
<dbReference type="RefSeq" id="WP_010893798.1">
    <property type="nucleotide sequence ID" value="NC_002488.3"/>
</dbReference>
<dbReference type="SMR" id="Q9PDT7"/>
<dbReference type="STRING" id="160492.XF_1292"/>
<dbReference type="KEGG" id="xfa:XF_1292"/>
<dbReference type="eggNOG" id="COG2919">
    <property type="taxonomic scope" value="Bacteria"/>
</dbReference>
<dbReference type="HOGENOM" id="CLU_134863_5_1_6"/>
<dbReference type="Proteomes" id="UP000000812">
    <property type="component" value="Chromosome"/>
</dbReference>
<dbReference type="GO" id="GO:0032153">
    <property type="term" value="C:cell division site"/>
    <property type="evidence" value="ECO:0007669"/>
    <property type="project" value="UniProtKB-UniRule"/>
</dbReference>
<dbReference type="GO" id="GO:0030428">
    <property type="term" value="C:cell septum"/>
    <property type="evidence" value="ECO:0007669"/>
    <property type="project" value="TreeGrafter"/>
</dbReference>
<dbReference type="GO" id="GO:0005886">
    <property type="term" value="C:plasma membrane"/>
    <property type="evidence" value="ECO:0007669"/>
    <property type="project" value="UniProtKB-SubCell"/>
</dbReference>
<dbReference type="GO" id="GO:0043093">
    <property type="term" value="P:FtsZ-dependent cytokinesis"/>
    <property type="evidence" value="ECO:0007669"/>
    <property type="project" value="UniProtKB-UniRule"/>
</dbReference>
<dbReference type="HAMAP" id="MF_00599">
    <property type="entry name" value="FtsB"/>
    <property type="match status" value="1"/>
</dbReference>
<dbReference type="InterPro" id="IPR023081">
    <property type="entry name" value="Cell_div_FtsB"/>
</dbReference>
<dbReference type="InterPro" id="IPR007060">
    <property type="entry name" value="FtsL/DivIC"/>
</dbReference>
<dbReference type="NCBIfam" id="NF002058">
    <property type="entry name" value="PRK00888.1"/>
    <property type="match status" value="1"/>
</dbReference>
<dbReference type="PANTHER" id="PTHR37485">
    <property type="entry name" value="CELL DIVISION PROTEIN FTSB"/>
    <property type="match status" value="1"/>
</dbReference>
<dbReference type="PANTHER" id="PTHR37485:SF1">
    <property type="entry name" value="CELL DIVISION PROTEIN FTSB"/>
    <property type="match status" value="1"/>
</dbReference>
<dbReference type="Pfam" id="PF04977">
    <property type="entry name" value="DivIC"/>
    <property type="match status" value="1"/>
</dbReference>
<gene>
    <name evidence="1" type="primary">ftsB</name>
    <name type="ordered locus">XF_1292</name>
</gene>
<reference key="1">
    <citation type="journal article" date="2000" name="Nature">
        <title>The genome sequence of the plant pathogen Xylella fastidiosa.</title>
        <authorList>
            <person name="Simpson A.J.G."/>
            <person name="Reinach F.C."/>
            <person name="Arruda P."/>
            <person name="Abreu F.A."/>
            <person name="Acencio M."/>
            <person name="Alvarenga R."/>
            <person name="Alves L.M.C."/>
            <person name="Araya J.E."/>
            <person name="Baia G.S."/>
            <person name="Baptista C.S."/>
            <person name="Barros M.H."/>
            <person name="Bonaccorsi E.D."/>
            <person name="Bordin S."/>
            <person name="Bove J.M."/>
            <person name="Briones M.R.S."/>
            <person name="Bueno M.R.P."/>
            <person name="Camargo A.A."/>
            <person name="Camargo L.E.A."/>
            <person name="Carraro D.M."/>
            <person name="Carrer H."/>
            <person name="Colauto N.B."/>
            <person name="Colombo C."/>
            <person name="Costa F.F."/>
            <person name="Costa M.C.R."/>
            <person name="Costa-Neto C.M."/>
            <person name="Coutinho L.L."/>
            <person name="Cristofani M."/>
            <person name="Dias-Neto E."/>
            <person name="Docena C."/>
            <person name="El-Dorry H."/>
            <person name="Facincani A.P."/>
            <person name="Ferreira A.J.S."/>
            <person name="Ferreira V.C.A."/>
            <person name="Ferro J.A."/>
            <person name="Fraga J.S."/>
            <person name="Franca S.C."/>
            <person name="Franco M.C."/>
            <person name="Frohme M."/>
            <person name="Furlan L.R."/>
            <person name="Garnier M."/>
            <person name="Goldman G.H."/>
            <person name="Goldman M.H.S."/>
            <person name="Gomes S.L."/>
            <person name="Gruber A."/>
            <person name="Ho P.L."/>
            <person name="Hoheisel J.D."/>
            <person name="Junqueira M.L."/>
            <person name="Kemper E.L."/>
            <person name="Kitajima J.P."/>
            <person name="Krieger J.E."/>
            <person name="Kuramae E.E."/>
            <person name="Laigret F."/>
            <person name="Lambais M.R."/>
            <person name="Leite L.C.C."/>
            <person name="Lemos E.G.M."/>
            <person name="Lemos M.V.F."/>
            <person name="Lopes S.A."/>
            <person name="Lopes C.R."/>
            <person name="Machado J.A."/>
            <person name="Machado M.A."/>
            <person name="Madeira A.M.B.N."/>
            <person name="Madeira H.M.F."/>
            <person name="Marino C.L."/>
            <person name="Marques M.V."/>
            <person name="Martins E.A.L."/>
            <person name="Martins E.M.F."/>
            <person name="Matsukuma A.Y."/>
            <person name="Menck C.F.M."/>
            <person name="Miracca E.C."/>
            <person name="Miyaki C.Y."/>
            <person name="Monteiro-Vitorello C.B."/>
            <person name="Moon D.H."/>
            <person name="Nagai M.A."/>
            <person name="Nascimento A.L.T.O."/>
            <person name="Netto L.E.S."/>
            <person name="Nhani A. Jr."/>
            <person name="Nobrega F.G."/>
            <person name="Nunes L.R."/>
            <person name="Oliveira M.A."/>
            <person name="de Oliveira M.C."/>
            <person name="de Oliveira R.C."/>
            <person name="Palmieri D.A."/>
            <person name="Paris A."/>
            <person name="Peixoto B.R."/>
            <person name="Pereira G.A.G."/>
            <person name="Pereira H.A. Jr."/>
            <person name="Pesquero J.B."/>
            <person name="Quaggio R.B."/>
            <person name="Roberto P.G."/>
            <person name="Rodrigues V."/>
            <person name="de Rosa A.J.M."/>
            <person name="de Rosa V.E. Jr."/>
            <person name="de Sa R.G."/>
            <person name="Santelli R.V."/>
            <person name="Sawasaki H.E."/>
            <person name="da Silva A.C.R."/>
            <person name="da Silva A.M."/>
            <person name="da Silva F.R."/>
            <person name="Silva W.A. Jr."/>
            <person name="da Silveira J.F."/>
            <person name="Silvestri M.L.Z."/>
            <person name="Siqueira W.J."/>
            <person name="de Souza A.A."/>
            <person name="de Souza A.P."/>
            <person name="Terenzi M.F."/>
            <person name="Truffi D."/>
            <person name="Tsai S.M."/>
            <person name="Tsuhako M.H."/>
            <person name="Vallada H."/>
            <person name="Van Sluys M.A."/>
            <person name="Verjovski-Almeida S."/>
            <person name="Vettore A.L."/>
            <person name="Zago M.A."/>
            <person name="Zatz M."/>
            <person name="Meidanis J."/>
            <person name="Setubal J.C."/>
        </authorList>
    </citation>
    <scope>NUCLEOTIDE SEQUENCE [LARGE SCALE GENOMIC DNA]</scope>
    <source>
        <strain>9a5c</strain>
    </source>
</reference>
<name>FTSB_XYLFA</name>
<feature type="chain" id="PRO_0000214463" description="Cell division protein FtsB">
    <location>
        <begin position="1"/>
        <end position="118"/>
    </location>
</feature>
<feature type="topological domain" description="Cytoplasmic" evidence="1">
    <location>
        <begin position="1"/>
        <end position="6"/>
    </location>
</feature>
<feature type="transmembrane region" description="Helical" evidence="1">
    <location>
        <begin position="7"/>
        <end position="24"/>
    </location>
</feature>
<feature type="topological domain" description="Periplasmic" evidence="1">
    <location>
        <begin position="25"/>
        <end position="118"/>
    </location>
</feature>
<feature type="region of interest" description="Disordered" evidence="2">
    <location>
        <begin position="97"/>
        <end position="118"/>
    </location>
</feature>
<feature type="coiled-coil region" evidence="1">
    <location>
        <begin position="30"/>
        <end position="66"/>
    </location>
</feature>
<feature type="compositionally biased region" description="Basic and acidic residues" evidence="2">
    <location>
        <begin position="103"/>
        <end position="118"/>
    </location>
</feature>
<keyword id="KW-0131">Cell cycle</keyword>
<keyword id="KW-0132">Cell division</keyword>
<keyword id="KW-0997">Cell inner membrane</keyword>
<keyword id="KW-1003">Cell membrane</keyword>
<keyword id="KW-0175">Coiled coil</keyword>
<keyword id="KW-0472">Membrane</keyword>
<keyword id="KW-0812">Transmembrane</keyword>
<keyword id="KW-1133">Transmembrane helix</keyword>
<comment type="function">
    <text evidence="1">Essential cell division protein. May link together the upstream cell division proteins, which are predominantly cytoplasmic, with the downstream cell division proteins, which are predominantly periplasmic.</text>
</comment>
<comment type="subunit">
    <text evidence="1">Part of a complex composed of FtsB, FtsL and FtsQ.</text>
</comment>
<comment type="subcellular location">
    <subcellularLocation>
        <location evidence="1">Cell inner membrane</location>
        <topology evidence="1">Single-pass type II membrane protein</topology>
    </subcellularLocation>
    <text evidence="1">Localizes to the division septum.</text>
</comment>
<comment type="similarity">
    <text evidence="1">Belongs to the FtsB family.</text>
</comment>
<protein>
    <recommendedName>
        <fullName evidence="1">Cell division protein FtsB</fullName>
    </recommendedName>
</protein>
<organism>
    <name type="scientific">Xylella fastidiosa (strain 9a5c)</name>
    <dbReference type="NCBI Taxonomy" id="160492"/>
    <lineage>
        <taxon>Bacteria</taxon>
        <taxon>Pseudomonadati</taxon>
        <taxon>Pseudomonadota</taxon>
        <taxon>Gammaproteobacteria</taxon>
        <taxon>Lysobacterales</taxon>
        <taxon>Lysobacteraceae</taxon>
        <taxon>Xylella</taxon>
    </lineage>
</organism>